<gene>
    <name type="primary">YAF9</name>
    <name type="ordered locus">CNBH3860</name>
</gene>
<reference key="1">
    <citation type="journal article" date="2005" name="Science">
        <title>The genome of the basidiomycetous yeast and human pathogen Cryptococcus neoformans.</title>
        <authorList>
            <person name="Loftus B.J."/>
            <person name="Fung E."/>
            <person name="Roncaglia P."/>
            <person name="Rowley D."/>
            <person name="Amedeo P."/>
            <person name="Bruno D."/>
            <person name="Vamathevan J."/>
            <person name="Miranda M."/>
            <person name="Anderson I.J."/>
            <person name="Fraser J.A."/>
            <person name="Allen J.E."/>
            <person name="Bosdet I.E."/>
            <person name="Brent M.R."/>
            <person name="Chiu R."/>
            <person name="Doering T.L."/>
            <person name="Donlin M.J."/>
            <person name="D'Souza C.A."/>
            <person name="Fox D.S."/>
            <person name="Grinberg V."/>
            <person name="Fu J."/>
            <person name="Fukushima M."/>
            <person name="Haas B.J."/>
            <person name="Huang J.C."/>
            <person name="Janbon G."/>
            <person name="Jones S.J.M."/>
            <person name="Koo H.L."/>
            <person name="Krzywinski M.I."/>
            <person name="Kwon-Chung K.J."/>
            <person name="Lengeler K.B."/>
            <person name="Maiti R."/>
            <person name="Marra M.A."/>
            <person name="Marra R.E."/>
            <person name="Mathewson C.A."/>
            <person name="Mitchell T.G."/>
            <person name="Pertea M."/>
            <person name="Riggs F.R."/>
            <person name="Salzberg S.L."/>
            <person name="Schein J.E."/>
            <person name="Shvartsbeyn A."/>
            <person name="Shin H."/>
            <person name="Shumway M."/>
            <person name="Specht C.A."/>
            <person name="Suh B.B."/>
            <person name="Tenney A."/>
            <person name="Utterback T.R."/>
            <person name="Wickes B.L."/>
            <person name="Wortman J.R."/>
            <person name="Wye N.H."/>
            <person name="Kronstad J.W."/>
            <person name="Lodge J.K."/>
            <person name="Heitman J."/>
            <person name="Davis R.W."/>
            <person name="Fraser C.M."/>
            <person name="Hyman R.W."/>
        </authorList>
    </citation>
    <scope>NUCLEOTIDE SEQUENCE [LARGE SCALE GENOMIC DNA]</scope>
    <source>
        <strain>B-3501A</strain>
    </source>
</reference>
<name>AF9_CRYNB</name>
<dbReference type="EMBL" id="AAEY01000042">
    <property type="protein sequence ID" value="EAL19287.1"/>
    <property type="molecule type" value="Genomic_DNA"/>
</dbReference>
<dbReference type="RefSeq" id="XP_773934.1">
    <property type="nucleotide sequence ID" value="XM_768841.1"/>
</dbReference>
<dbReference type="SMR" id="P0CM09"/>
<dbReference type="EnsemblFungi" id="AAW45303">
    <property type="protein sequence ID" value="AAW45303"/>
    <property type="gene ID" value="CNI04050"/>
</dbReference>
<dbReference type="GeneID" id="4937914"/>
<dbReference type="KEGG" id="cnb:CNBH3860"/>
<dbReference type="VEuPathDB" id="FungiDB:CNBH3860"/>
<dbReference type="HOGENOM" id="CLU_051385_2_1_1"/>
<dbReference type="OrthoDB" id="9502at5206"/>
<dbReference type="GO" id="GO:0000785">
    <property type="term" value="C:chromatin"/>
    <property type="evidence" value="ECO:0007669"/>
    <property type="project" value="UniProtKB-ARBA"/>
</dbReference>
<dbReference type="GO" id="GO:0005737">
    <property type="term" value="C:cytoplasm"/>
    <property type="evidence" value="ECO:0007669"/>
    <property type="project" value="UniProtKB-SubCell"/>
</dbReference>
<dbReference type="GO" id="GO:0005634">
    <property type="term" value="C:nucleus"/>
    <property type="evidence" value="ECO:0007669"/>
    <property type="project" value="UniProtKB-SubCell"/>
</dbReference>
<dbReference type="GO" id="GO:0006325">
    <property type="term" value="P:chromatin organization"/>
    <property type="evidence" value="ECO:0007669"/>
    <property type="project" value="UniProtKB-KW"/>
</dbReference>
<dbReference type="GO" id="GO:0006281">
    <property type="term" value="P:DNA repair"/>
    <property type="evidence" value="ECO:0007669"/>
    <property type="project" value="UniProtKB-KW"/>
</dbReference>
<dbReference type="GO" id="GO:0006355">
    <property type="term" value="P:regulation of DNA-templated transcription"/>
    <property type="evidence" value="ECO:0007669"/>
    <property type="project" value="InterPro"/>
</dbReference>
<dbReference type="CDD" id="cd16908">
    <property type="entry name" value="YEATS_Yaf9_like"/>
    <property type="match status" value="1"/>
</dbReference>
<dbReference type="Gene3D" id="2.60.40.1970">
    <property type="entry name" value="YEATS domain"/>
    <property type="match status" value="1"/>
</dbReference>
<dbReference type="InterPro" id="IPR038704">
    <property type="entry name" value="YEAST_sf"/>
</dbReference>
<dbReference type="InterPro" id="IPR005033">
    <property type="entry name" value="YEATS"/>
</dbReference>
<dbReference type="InterPro" id="IPR055129">
    <property type="entry name" value="YEATS_dom"/>
</dbReference>
<dbReference type="PANTHER" id="PTHR23195">
    <property type="entry name" value="YEATS DOMAIN"/>
    <property type="match status" value="1"/>
</dbReference>
<dbReference type="Pfam" id="PF03366">
    <property type="entry name" value="YEATS"/>
    <property type="match status" value="1"/>
</dbReference>
<dbReference type="PROSITE" id="PS51037">
    <property type="entry name" value="YEATS"/>
    <property type="match status" value="1"/>
</dbReference>
<organism>
    <name type="scientific">Cryptococcus neoformans var. neoformans serotype D (strain B-3501A)</name>
    <name type="common">Filobasidiella neoformans</name>
    <dbReference type="NCBI Taxonomy" id="283643"/>
    <lineage>
        <taxon>Eukaryota</taxon>
        <taxon>Fungi</taxon>
        <taxon>Dikarya</taxon>
        <taxon>Basidiomycota</taxon>
        <taxon>Agaricomycotina</taxon>
        <taxon>Tremellomycetes</taxon>
        <taxon>Tremellales</taxon>
        <taxon>Cryptococcaceae</taxon>
        <taxon>Cryptococcus</taxon>
        <taxon>Cryptococcus neoformans species complex</taxon>
    </lineage>
</organism>
<keyword id="KW-0010">Activator</keyword>
<keyword id="KW-0156">Chromatin regulator</keyword>
<keyword id="KW-0175">Coiled coil</keyword>
<keyword id="KW-0963">Cytoplasm</keyword>
<keyword id="KW-0227">DNA damage</keyword>
<keyword id="KW-0234">DNA repair</keyword>
<keyword id="KW-0539">Nucleus</keyword>
<keyword id="KW-0804">Transcription</keyword>
<keyword id="KW-0805">Transcription regulation</keyword>
<accession>P0CM09</accession>
<accession>Q55MP8</accession>
<accession>Q5KB23</accession>
<evidence type="ECO:0000250" key="1"/>
<evidence type="ECO:0000255" key="2"/>
<evidence type="ECO:0000255" key="3">
    <source>
        <dbReference type="PROSITE-ProRule" id="PRU00376"/>
    </source>
</evidence>
<evidence type="ECO:0000256" key="4">
    <source>
        <dbReference type="SAM" id="MobiDB-lite"/>
    </source>
</evidence>
<evidence type="ECO:0000305" key="5"/>
<feature type="chain" id="PRO_0000410005" description="Protein AF-9 homolog">
    <location>
        <begin position="1"/>
        <end position="392"/>
    </location>
</feature>
<feature type="domain" description="YEATS" evidence="3">
    <location>
        <begin position="5"/>
        <end position="268"/>
    </location>
</feature>
<feature type="region of interest" description="Disordered" evidence="4">
    <location>
        <begin position="146"/>
        <end position="213"/>
    </location>
</feature>
<feature type="region of interest" description="Disordered" evidence="4">
    <location>
        <begin position="263"/>
        <end position="330"/>
    </location>
</feature>
<feature type="coiled-coil region" evidence="2">
    <location>
        <begin position="357"/>
        <end position="392"/>
    </location>
</feature>
<feature type="compositionally biased region" description="Polar residues" evidence="4">
    <location>
        <begin position="192"/>
        <end position="203"/>
    </location>
</feature>
<feature type="compositionally biased region" description="Basic and acidic residues" evidence="4">
    <location>
        <begin position="280"/>
        <end position="290"/>
    </location>
</feature>
<feature type="compositionally biased region" description="Low complexity" evidence="4">
    <location>
        <begin position="296"/>
        <end position="314"/>
    </location>
</feature>
<comment type="function">
    <text evidence="1">Component of the SWR1 complex which mediates the ATP-dependent exchange of histone H2A for the H2A variant HZT1 leading to transcriptional regulation of selected genes by chromatin remodeling. Component of the NuA4 histone acetyltransferase complex which is involved in transcriptional activation of selected genes principally by acetylation of nucleosomal histones H4 and H2A. The NuA4 complex is also involved in DNA repair. Yaf9 may also be required for viability in conditions in which the structural integrity of the spindle is compromised (By similarity).</text>
</comment>
<comment type="subunit">
    <text evidence="1">Component of the SWR1 chromatin-remodeling complex and of the NuA4 histone acetyltransferase complex.</text>
</comment>
<comment type="subcellular location">
    <subcellularLocation>
        <location evidence="1">Cytoplasm</location>
    </subcellularLocation>
    <subcellularLocation>
        <location evidence="3">Nucleus</location>
    </subcellularLocation>
</comment>
<comment type="domain">
    <text evidence="1">The coiled-coil domain is required for assembly into the NuA4 complex.</text>
</comment>
<comment type="similarity">
    <text evidence="5">Belongs to the YAF9 family.</text>
</comment>
<protein>
    <recommendedName>
        <fullName>Protein AF-9 homolog</fullName>
    </recommendedName>
</protein>
<proteinExistence type="inferred from homology"/>
<sequence length="392" mass="42549">MSSERVRGIQVHRPIIFGSHARLLTEAEKQLAPAGHTHKWTVFLNSAASPPLKQGEPPDYEDIDYLPGGADDLSYFIRKVTFKLHETYATPNRVIDKPPYRVSETGWGEFTVQIRIQLIPESSEKPLGLQHNIKLHHWGAPVEPLPVVSGAPTPTPVPTESNTEVKLEPDTPAPLEESVTPAPTIQRPASEPATNEPGSNQGTPAPPGGDSTEQIKVDVATPALEVIEPSATPAPLSLAARLPIHAWQYDEIVFSDPPRQFLDILNAHPPTPLPAKSRRPRDQREDYEARKKGKSAARGASVTASARASRAGTVDTAAAGTPAPAQIGIPGEPGSADVPLEFTQEMLKGEHNAMLDARVKIVEQMDRWRERLIALEKELAKAKEDVKATAAM</sequence>